<feature type="chain" id="PRO_0000370243" description="Zinc finger CCHC domain-containing protein 7">
    <location>
        <begin position="1"/>
        <end position="563"/>
    </location>
</feature>
<feature type="zinc finger region" description="CCHC-type 1" evidence="2">
    <location>
        <begin position="265"/>
        <end position="282"/>
    </location>
</feature>
<feature type="zinc finger region" description="CCHC-type 2" evidence="2">
    <location>
        <begin position="287"/>
        <end position="304"/>
    </location>
</feature>
<feature type="zinc finger region" description="CCHC-type 3" evidence="2">
    <location>
        <begin position="305"/>
        <end position="322"/>
    </location>
</feature>
<feature type="zinc finger region" description="CCHC-type 4" evidence="2">
    <location>
        <begin position="328"/>
        <end position="345"/>
    </location>
</feature>
<feature type="zinc finger region" description="CCHC-type 5" evidence="2">
    <location>
        <begin position="372"/>
        <end position="389"/>
    </location>
</feature>
<feature type="region of interest" description="Disordered" evidence="3">
    <location>
        <begin position="41"/>
        <end position="64"/>
    </location>
</feature>
<feature type="region of interest" description="Disordered" evidence="3">
    <location>
        <begin position="133"/>
        <end position="157"/>
    </location>
</feature>
<feature type="region of interest" description="Disordered" evidence="3">
    <location>
        <begin position="443"/>
        <end position="494"/>
    </location>
</feature>
<feature type="compositionally biased region" description="Polar residues" evidence="3">
    <location>
        <begin position="133"/>
        <end position="142"/>
    </location>
</feature>
<feature type="compositionally biased region" description="Low complexity" evidence="3">
    <location>
        <begin position="143"/>
        <end position="157"/>
    </location>
</feature>
<feature type="compositionally biased region" description="Basic residues" evidence="3">
    <location>
        <begin position="449"/>
        <end position="463"/>
    </location>
</feature>
<feature type="compositionally biased region" description="Basic and acidic residues" evidence="3">
    <location>
        <begin position="464"/>
        <end position="476"/>
    </location>
</feature>
<feature type="compositionally biased region" description="Basic residues" evidence="3">
    <location>
        <begin position="477"/>
        <end position="486"/>
    </location>
</feature>
<gene>
    <name type="primary">zcchc7</name>
</gene>
<dbReference type="EMBL" id="BC129701">
    <property type="protein sequence ID" value="AAI29702.1"/>
    <property type="status" value="ALT_INIT"/>
    <property type="molecule type" value="mRNA"/>
</dbReference>
<dbReference type="AGR" id="Xenbase:XB-GENE-6255854"/>
<dbReference type="Xenbase" id="XB-GENE-6255854">
    <property type="gene designation" value="zcchc7.L"/>
</dbReference>
<dbReference type="Proteomes" id="UP000186698">
    <property type="component" value="Unplaced"/>
</dbReference>
<dbReference type="GO" id="GO:0005730">
    <property type="term" value="C:nucleolus"/>
    <property type="evidence" value="ECO:0007669"/>
    <property type="project" value="UniProtKB-SubCell"/>
</dbReference>
<dbReference type="GO" id="GO:0031499">
    <property type="term" value="C:TRAMP complex"/>
    <property type="evidence" value="ECO:0000318"/>
    <property type="project" value="GO_Central"/>
</dbReference>
<dbReference type="GO" id="GO:0003723">
    <property type="term" value="F:RNA binding"/>
    <property type="evidence" value="ECO:0000318"/>
    <property type="project" value="GO_Central"/>
</dbReference>
<dbReference type="GO" id="GO:0008270">
    <property type="term" value="F:zinc ion binding"/>
    <property type="evidence" value="ECO:0007669"/>
    <property type="project" value="UniProtKB-KW"/>
</dbReference>
<dbReference type="GO" id="GO:0071031">
    <property type="term" value="P:nuclear mRNA surveillance of mRNA 3'-end processing"/>
    <property type="evidence" value="ECO:0000318"/>
    <property type="project" value="GO_Central"/>
</dbReference>
<dbReference type="GO" id="GO:0071039">
    <property type="term" value="P:nuclear polyadenylation-dependent CUT catabolic process"/>
    <property type="evidence" value="ECO:0000318"/>
    <property type="project" value="GO_Central"/>
</dbReference>
<dbReference type="GO" id="GO:0071035">
    <property type="term" value="P:nuclear polyadenylation-dependent rRNA catabolic process"/>
    <property type="evidence" value="ECO:0000318"/>
    <property type="project" value="GO_Central"/>
</dbReference>
<dbReference type="GO" id="GO:0071036">
    <property type="term" value="P:nuclear polyadenylation-dependent snoRNA catabolic process"/>
    <property type="evidence" value="ECO:0000318"/>
    <property type="project" value="GO_Central"/>
</dbReference>
<dbReference type="GO" id="GO:0071037">
    <property type="term" value="P:nuclear polyadenylation-dependent snRNA catabolic process"/>
    <property type="evidence" value="ECO:0000318"/>
    <property type="project" value="GO_Central"/>
</dbReference>
<dbReference type="GO" id="GO:0071038">
    <property type="term" value="P:TRAMP-dependent tRNA surveillance pathway"/>
    <property type="evidence" value="ECO:0000318"/>
    <property type="project" value="GO_Central"/>
</dbReference>
<dbReference type="FunFam" id="4.10.60.10:FF:000020">
    <property type="entry name" value="Zinc finger CCHC domain-containing protein 7"/>
    <property type="match status" value="1"/>
</dbReference>
<dbReference type="Gene3D" id="4.10.60.10">
    <property type="entry name" value="Zinc finger, CCHC-type"/>
    <property type="match status" value="2"/>
</dbReference>
<dbReference type="InterPro" id="IPR051644">
    <property type="entry name" value="TRAMP_AT-DNA-binding"/>
</dbReference>
<dbReference type="InterPro" id="IPR001878">
    <property type="entry name" value="Znf_CCHC"/>
</dbReference>
<dbReference type="InterPro" id="IPR036875">
    <property type="entry name" value="Znf_CCHC_sf"/>
</dbReference>
<dbReference type="PANTHER" id="PTHR46543">
    <property type="entry name" value="ZINC FINGER CCHC DOMAIN-CONTAINING PROTEIN 7"/>
    <property type="match status" value="1"/>
</dbReference>
<dbReference type="PANTHER" id="PTHR46543:SF1">
    <property type="entry name" value="ZINC FINGER CCHC DOMAIN-CONTAINING PROTEIN 7"/>
    <property type="match status" value="1"/>
</dbReference>
<dbReference type="Pfam" id="PF00098">
    <property type="entry name" value="zf-CCHC"/>
    <property type="match status" value="1"/>
</dbReference>
<dbReference type="SMART" id="SM00343">
    <property type="entry name" value="ZnF_C2HC"/>
    <property type="match status" value="5"/>
</dbReference>
<dbReference type="SUPFAM" id="SSF57756">
    <property type="entry name" value="Retrovirus zinc finger-like domains"/>
    <property type="match status" value="2"/>
</dbReference>
<dbReference type="PROSITE" id="PS50158">
    <property type="entry name" value="ZF_CCHC"/>
    <property type="match status" value="3"/>
</dbReference>
<evidence type="ECO:0000250" key="1"/>
<evidence type="ECO:0000255" key="2">
    <source>
        <dbReference type="PROSITE-ProRule" id="PRU00047"/>
    </source>
</evidence>
<evidence type="ECO:0000256" key="3">
    <source>
        <dbReference type="SAM" id="MobiDB-lite"/>
    </source>
</evidence>
<evidence type="ECO:0000305" key="4"/>
<comment type="subunit">
    <text evidence="1">Component of a nucleolar TRAMP-like complex, an ATP-dependent exosome regulatory complex consisting of a helicase (MTREX), an oligadenylate polymerase (PAPD5 or PAPD7), and a substrate specific RNA-binding factor (ZCCHC7 or ZCCHC8). Several TRAMP-like complexes exist with specific compositions and are associated with nuclear, or nucleolar RNA exosomes (By similarity).</text>
</comment>
<comment type="subcellular location">
    <subcellularLocation>
        <location evidence="1">Nucleus</location>
        <location evidence="1">Nucleolus</location>
    </subcellularLocation>
</comment>
<comment type="sequence caution" evidence="4">
    <conflict type="erroneous initiation">
        <sequence resource="EMBL-CDS" id="AAI29702"/>
    </conflict>
</comment>
<organism>
    <name type="scientific">Xenopus laevis</name>
    <name type="common">African clawed frog</name>
    <dbReference type="NCBI Taxonomy" id="8355"/>
    <lineage>
        <taxon>Eukaryota</taxon>
        <taxon>Metazoa</taxon>
        <taxon>Chordata</taxon>
        <taxon>Craniata</taxon>
        <taxon>Vertebrata</taxon>
        <taxon>Euteleostomi</taxon>
        <taxon>Amphibia</taxon>
        <taxon>Batrachia</taxon>
        <taxon>Anura</taxon>
        <taxon>Pipoidea</taxon>
        <taxon>Pipidae</taxon>
        <taxon>Xenopodinae</taxon>
        <taxon>Xenopus</taxon>
        <taxon>Xenopus</taxon>
    </lineage>
</organism>
<reference key="1">
    <citation type="submission" date="2006-12" db="EMBL/GenBank/DDBJ databases">
        <authorList>
            <consortium name="NIH - Xenopus Gene Collection (XGC) project"/>
        </authorList>
    </citation>
    <scope>NUCLEOTIDE SEQUENCE [LARGE SCALE MRNA]</scope>
    <source>
        <tissue>Thymus</tissue>
    </source>
</reference>
<protein>
    <recommendedName>
        <fullName>Zinc finger CCHC domain-containing protein 7</fullName>
    </recommendedName>
    <alternativeName>
        <fullName>TRAMP-like complex RNA-binding factor ZCCHC7</fullName>
    </alternativeName>
</protein>
<name>ZCHC7_XENLA</name>
<keyword id="KW-0479">Metal-binding</keyword>
<keyword id="KW-0539">Nucleus</keyword>
<keyword id="KW-1185">Reference proteome</keyword>
<keyword id="KW-0677">Repeat</keyword>
<keyword id="KW-0862">Zinc</keyword>
<keyword id="KW-0863">Zinc-finger</keyword>
<sequence>MFNCDEDLKAYEDELYHEETSSDESIDSELEFHLYSQVHYSQNLSESKPEEDTGGDSVTYVPGAKQQNNACTEKDDKLVDIIILSDSDAKVSDTCPVIILSDTTEEDSVYSSKIKKKYSSTYVQGESLCGPCSHSTPKVSAPQSNNFKSQKSCQNSSSKNYSGGYVQEVLVIRGSSEDEEANKSENDIIISESDMSDVENWMLLGRAKEDGDASIQLNLEGYKILSDDEGERGAAWSISEKDVEAQIGNYTPLRRSNRYYTDKNVVCRNCDKRGHLSKNCPVPKKLPACCLCGERGHYQNSCPSRYCLNCFLPGHFFKECIERAYWRKTCHRCSMPGHYADACPEIWRQYHLTIKAGPIKKPKSHSGQKDIVYCCNCAKKGHCIYECKERRMNSDKLPTCQLVFSYDHEYDIRKRNERTKSKIKDFQKAGLLTCEMREFSESKVDAKPPAKKRKKKHPSKKERKGTIRDYECAETKQKKKHKKRKSGLQEIEGDFPRGIPNSYVELKKPSKKYDGSFLHLDKTKDMFKNRQKKTRRGKRCSSAVDQDLLIIKQKKKKSKRKVA</sequence>
<proteinExistence type="evidence at transcript level"/>
<accession>A1L2T6</accession>